<name>RSGA_XANCP</name>
<gene>
    <name evidence="1" type="primary">rsgA</name>
    <name type="ordered locus">XCC3362</name>
</gene>
<proteinExistence type="inferred from homology"/>
<evidence type="ECO:0000255" key="1">
    <source>
        <dbReference type="HAMAP-Rule" id="MF_01820"/>
    </source>
</evidence>
<evidence type="ECO:0000255" key="2">
    <source>
        <dbReference type="PROSITE-ProRule" id="PRU01058"/>
    </source>
</evidence>
<evidence type="ECO:0000256" key="3">
    <source>
        <dbReference type="SAM" id="MobiDB-lite"/>
    </source>
</evidence>
<sequence length="363" mass="39257">MSDTSPNYHTLQSIGWPWPGPPEDPAWQAIFAAHPQALPARVVEQHRTGYVVADTPEASLKAESLPEWQRPRFPSHERAAVGDWVLMEGKRIVALLPRRTSIKRGAAGEHYHQQVIAANIDTVFIVCGLDADFNPRRIERYLLLVGGGGAEPVVVLTKADQTEYAEDALAVLEELEAQNIALRAVNAKDPESVAALRPWLGDGRTAVLVGSSGAGKSTLTNTLLGTQKMKTNAVRENDSRGRHTTTHRALIPLPSGACLIDTPGMRELKPTGEEDLAEGGFSDVEALAAQCRFNDCAHIAEPGCAVRAAIEADQLDPERVANYMKLRVEVASAAEKLATRVAQNNRGKGSGKRPASVDRPGRR</sequence>
<reference key="1">
    <citation type="journal article" date="2002" name="Nature">
        <title>Comparison of the genomes of two Xanthomonas pathogens with differing host specificities.</title>
        <authorList>
            <person name="da Silva A.C.R."/>
            <person name="Ferro J.A."/>
            <person name="Reinach F.C."/>
            <person name="Farah C.S."/>
            <person name="Furlan L.R."/>
            <person name="Quaggio R.B."/>
            <person name="Monteiro-Vitorello C.B."/>
            <person name="Van Sluys M.A."/>
            <person name="Almeida N.F. Jr."/>
            <person name="Alves L.M.C."/>
            <person name="do Amaral A.M."/>
            <person name="Bertolini M.C."/>
            <person name="Camargo L.E.A."/>
            <person name="Camarotte G."/>
            <person name="Cannavan F."/>
            <person name="Cardozo J."/>
            <person name="Chambergo F."/>
            <person name="Ciapina L.P."/>
            <person name="Cicarelli R.M.B."/>
            <person name="Coutinho L.L."/>
            <person name="Cursino-Santos J.R."/>
            <person name="El-Dorry H."/>
            <person name="Faria J.B."/>
            <person name="Ferreira A.J.S."/>
            <person name="Ferreira R.C.C."/>
            <person name="Ferro M.I.T."/>
            <person name="Formighieri E.F."/>
            <person name="Franco M.C."/>
            <person name="Greggio C.C."/>
            <person name="Gruber A."/>
            <person name="Katsuyama A.M."/>
            <person name="Kishi L.T."/>
            <person name="Leite R.P."/>
            <person name="Lemos E.G.M."/>
            <person name="Lemos M.V.F."/>
            <person name="Locali E.C."/>
            <person name="Machado M.A."/>
            <person name="Madeira A.M.B.N."/>
            <person name="Martinez-Rossi N.M."/>
            <person name="Martins E.C."/>
            <person name="Meidanis J."/>
            <person name="Menck C.F.M."/>
            <person name="Miyaki C.Y."/>
            <person name="Moon D.H."/>
            <person name="Moreira L.M."/>
            <person name="Novo M.T.M."/>
            <person name="Okura V.K."/>
            <person name="Oliveira M.C."/>
            <person name="Oliveira V.R."/>
            <person name="Pereira H.A."/>
            <person name="Rossi A."/>
            <person name="Sena J.A.D."/>
            <person name="Silva C."/>
            <person name="de Souza R.F."/>
            <person name="Spinola L.A.F."/>
            <person name="Takita M.A."/>
            <person name="Tamura R.E."/>
            <person name="Teixeira E.C."/>
            <person name="Tezza R.I.D."/>
            <person name="Trindade dos Santos M."/>
            <person name="Truffi D."/>
            <person name="Tsai S.M."/>
            <person name="White F.F."/>
            <person name="Setubal J.C."/>
            <person name="Kitajima J.P."/>
        </authorList>
    </citation>
    <scope>NUCLEOTIDE SEQUENCE [LARGE SCALE GENOMIC DNA]</scope>
    <source>
        <strain>ATCC 33913 / DSM 3586 / NCPPB 528 / LMG 568 / P 25</strain>
    </source>
</reference>
<feature type="chain" id="PRO_0000171547" description="Small ribosomal subunit biogenesis GTPase RsgA">
    <location>
        <begin position="1"/>
        <end position="363"/>
    </location>
</feature>
<feature type="domain" description="CP-type G" evidence="2">
    <location>
        <begin position="112"/>
        <end position="268"/>
    </location>
</feature>
<feature type="region of interest" description="Disordered" evidence="3">
    <location>
        <begin position="340"/>
        <end position="363"/>
    </location>
</feature>
<feature type="binding site" evidence="1">
    <location>
        <begin position="157"/>
        <end position="160"/>
    </location>
    <ligand>
        <name>GTP</name>
        <dbReference type="ChEBI" id="CHEBI:37565"/>
    </ligand>
</feature>
<feature type="binding site" evidence="1">
    <location>
        <begin position="210"/>
        <end position="218"/>
    </location>
    <ligand>
        <name>GTP</name>
        <dbReference type="ChEBI" id="CHEBI:37565"/>
    </ligand>
</feature>
<feature type="binding site" evidence="1">
    <location>
        <position position="291"/>
    </location>
    <ligand>
        <name>Zn(2+)</name>
        <dbReference type="ChEBI" id="CHEBI:29105"/>
    </ligand>
</feature>
<feature type="binding site" evidence="1">
    <location>
        <position position="296"/>
    </location>
    <ligand>
        <name>Zn(2+)</name>
        <dbReference type="ChEBI" id="CHEBI:29105"/>
    </ligand>
</feature>
<feature type="binding site" evidence="1">
    <location>
        <position position="298"/>
    </location>
    <ligand>
        <name>Zn(2+)</name>
        <dbReference type="ChEBI" id="CHEBI:29105"/>
    </ligand>
</feature>
<feature type="binding site" evidence="1">
    <location>
        <position position="304"/>
    </location>
    <ligand>
        <name>Zn(2+)</name>
        <dbReference type="ChEBI" id="CHEBI:29105"/>
    </ligand>
</feature>
<accession>Q8P5H9</accession>
<dbReference type="EC" id="3.6.1.-" evidence="1"/>
<dbReference type="EMBL" id="AE008922">
    <property type="protein sequence ID" value="AAM42632.1"/>
    <property type="molecule type" value="Genomic_DNA"/>
</dbReference>
<dbReference type="RefSeq" id="NP_638708.1">
    <property type="nucleotide sequence ID" value="NC_003902.1"/>
</dbReference>
<dbReference type="RefSeq" id="WP_011038460.1">
    <property type="nucleotide sequence ID" value="NC_003902.1"/>
</dbReference>
<dbReference type="SMR" id="Q8P5H9"/>
<dbReference type="STRING" id="190485.XCC3362"/>
<dbReference type="EnsemblBacteria" id="AAM42632">
    <property type="protein sequence ID" value="AAM42632"/>
    <property type="gene ID" value="XCC3362"/>
</dbReference>
<dbReference type="KEGG" id="xcc:XCC3362"/>
<dbReference type="PATRIC" id="fig|190485.4.peg.3597"/>
<dbReference type="eggNOG" id="COG1162">
    <property type="taxonomic scope" value="Bacteria"/>
</dbReference>
<dbReference type="HOGENOM" id="CLU_033617_0_1_6"/>
<dbReference type="OrthoDB" id="9809485at2"/>
<dbReference type="Proteomes" id="UP000001010">
    <property type="component" value="Chromosome"/>
</dbReference>
<dbReference type="GO" id="GO:0005737">
    <property type="term" value="C:cytoplasm"/>
    <property type="evidence" value="ECO:0007669"/>
    <property type="project" value="UniProtKB-SubCell"/>
</dbReference>
<dbReference type="GO" id="GO:0005525">
    <property type="term" value="F:GTP binding"/>
    <property type="evidence" value="ECO:0007669"/>
    <property type="project" value="UniProtKB-UniRule"/>
</dbReference>
<dbReference type="GO" id="GO:0003924">
    <property type="term" value="F:GTPase activity"/>
    <property type="evidence" value="ECO:0007669"/>
    <property type="project" value="UniProtKB-UniRule"/>
</dbReference>
<dbReference type="GO" id="GO:0046872">
    <property type="term" value="F:metal ion binding"/>
    <property type="evidence" value="ECO:0007669"/>
    <property type="project" value="UniProtKB-KW"/>
</dbReference>
<dbReference type="GO" id="GO:0019843">
    <property type="term" value="F:rRNA binding"/>
    <property type="evidence" value="ECO:0007669"/>
    <property type="project" value="UniProtKB-KW"/>
</dbReference>
<dbReference type="GO" id="GO:0042274">
    <property type="term" value="P:ribosomal small subunit biogenesis"/>
    <property type="evidence" value="ECO:0007669"/>
    <property type="project" value="UniProtKB-UniRule"/>
</dbReference>
<dbReference type="CDD" id="cd01854">
    <property type="entry name" value="YjeQ_EngC"/>
    <property type="match status" value="1"/>
</dbReference>
<dbReference type="Gene3D" id="3.40.50.300">
    <property type="entry name" value="P-loop containing nucleotide triphosphate hydrolases"/>
    <property type="match status" value="1"/>
</dbReference>
<dbReference type="Gene3D" id="1.10.40.50">
    <property type="entry name" value="Probable gtpase engc, domain 3"/>
    <property type="match status" value="1"/>
</dbReference>
<dbReference type="HAMAP" id="MF_01820">
    <property type="entry name" value="GTPase_RsgA"/>
    <property type="match status" value="1"/>
</dbReference>
<dbReference type="InterPro" id="IPR030378">
    <property type="entry name" value="G_CP_dom"/>
</dbReference>
<dbReference type="InterPro" id="IPR027417">
    <property type="entry name" value="P-loop_NTPase"/>
</dbReference>
<dbReference type="InterPro" id="IPR004881">
    <property type="entry name" value="Ribosome_biogen_GTPase_RsgA"/>
</dbReference>
<dbReference type="InterPro" id="IPR010914">
    <property type="entry name" value="RsgA_GTPase_dom"/>
</dbReference>
<dbReference type="NCBIfam" id="TIGR00157">
    <property type="entry name" value="ribosome small subunit-dependent GTPase A"/>
    <property type="match status" value="1"/>
</dbReference>
<dbReference type="PANTHER" id="PTHR32120">
    <property type="entry name" value="SMALL RIBOSOMAL SUBUNIT BIOGENESIS GTPASE RSGA"/>
    <property type="match status" value="1"/>
</dbReference>
<dbReference type="PANTHER" id="PTHR32120:SF10">
    <property type="entry name" value="SMALL RIBOSOMAL SUBUNIT BIOGENESIS GTPASE RSGA"/>
    <property type="match status" value="1"/>
</dbReference>
<dbReference type="Pfam" id="PF03193">
    <property type="entry name" value="RsgA_GTPase"/>
    <property type="match status" value="1"/>
</dbReference>
<dbReference type="SUPFAM" id="SSF52540">
    <property type="entry name" value="P-loop containing nucleoside triphosphate hydrolases"/>
    <property type="match status" value="1"/>
</dbReference>
<dbReference type="PROSITE" id="PS50936">
    <property type="entry name" value="ENGC_GTPASE"/>
    <property type="match status" value="1"/>
</dbReference>
<dbReference type="PROSITE" id="PS51721">
    <property type="entry name" value="G_CP"/>
    <property type="match status" value="1"/>
</dbReference>
<organism>
    <name type="scientific">Xanthomonas campestris pv. campestris (strain ATCC 33913 / DSM 3586 / NCPPB 528 / LMG 568 / P 25)</name>
    <dbReference type="NCBI Taxonomy" id="190485"/>
    <lineage>
        <taxon>Bacteria</taxon>
        <taxon>Pseudomonadati</taxon>
        <taxon>Pseudomonadota</taxon>
        <taxon>Gammaproteobacteria</taxon>
        <taxon>Lysobacterales</taxon>
        <taxon>Lysobacteraceae</taxon>
        <taxon>Xanthomonas</taxon>
    </lineage>
</organism>
<keyword id="KW-0963">Cytoplasm</keyword>
<keyword id="KW-0342">GTP-binding</keyword>
<keyword id="KW-0378">Hydrolase</keyword>
<keyword id="KW-0479">Metal-binding</keyword>
<keyword id="KW-0547">Nucleotide-binding</keyword>
<keyword id="KW-1185">Reference proteome</keyword>
<keyword id="KW-0690">Ribosome biogenesis</keyword>
<keyword id="KW-0694">RNA-binding</keyword>
<keyword id="KW-0699">rRNA-binding</keyword>
<keyword id="KW-0862">Zinc</keyword>
<comment type="function">
    <text evidence="1">One of several proteins that assist in the late maturation steps of the functional core of the 30S ribosomal subunit. Helps release RbfA from mature subunits. May play a role in the assembly of ribosomal proteins into the subunit. Circularly permuted GTPase that catalyzes slow GTP hydrolysis, GTPase activity is stimulated by the 30S ribosomal subunit.</text>
</comment>
<comment type="cofactor">
    <cofactor evidence="1">
        <name>Zn(2+)</name>
        <dbReference type="ChEBI" id="CHEBI:29105"/>
    </cofactor>
    <text evidence="1">Binds 1 zinc ion per subunit.</text>
</comment>
<comment type="subunit">
    <text evidence="1">Monomer. Associates with 30S ribosomal subunit, binds 16S rRNA.</text>
</comment>
<comment type="subcellular location">
    <subcellularLocation>
        <location evidence="1">Cytoplasm</location>
    </subcellularLocation>
</comment>
<comment type="similarity">
    <text evidence="1">Belongs to the TRAFAC class YlqF/YawG GTPase family. RsgA subfamily.</text>
</comment>
<protein>
    <recommendedName>
        <fullName evidence="1">Small ribosomal subunit biogenesis GTPase RsgA</fullName>
        <ecNumber evidence="1">3.6.1.-</ecNumber>
    </recommendedName>
</protein>